<keyword id="KW-0067">ATP-binding</keyword>
<keyword id="KW-0963">Cytoplasm</keyword>
<keyword id="KW-0347">Helicase</keyword>
<keyword id="KW-0378">Hydrolase</keyword>
<keyword id="KW-0547">Nucleotide-binding</keyword>
<keyword id="KW-0694">RNA-binding</keyword>
<reference key="1">
    <citation type="journal article" date="2006" name="BMC Genomics">
        <title>Complete genome sequence of Shigella flexneri 5b and comparison with Shigella flexneri 2a.</title>
        <authorList>
            <person name="Nie H."/>
            <person name="Yang F."/>
            <person name="Zhang X."/>
            <person name="Yang J."/>
            <person name="Chen L."/>
            <person name="Wang J."/>
            <person name="Xiong Z."/>
            <person name="Peng J."/>
            <person name="Sun L."/>
            <person name="Dong J."/>
            <person name="Xue Y."/>
            <person name="Xu X."/>
            <person name="Chen S."/>
            <person name="Yao Z."/>
            <person name="Shen Y."/>
            <person name="Jin Q."/>
        </authorList>
    </citation>
    <scope>NUCLEOTIDE SEQUENCE [LARGE SCALE GENOMIC DNA]</scope>
    <source>
        <strain>8401</strain>
    </source>
</reference>
<comment type="function">
    <text evidence="1">DEAD-box RNA helicase involved in RNA degradation. Has RNA-dependent ATPase activity and unwinds double-stranded RNA.</text>
</comment>
<comment type="catalytic activity">
    <reaction evidence="1">
        <text>ATP + H2O = ADP + phosphate + H(+)</text>
        <dbReference type="Rhea" id="RHEA:13065"/>
        <dbReference type="ChEBI" id="CHEBI:15377"/>
        <dbReference type="ChEBI" id="CHEBI:15378"/>
        <dbReference type="ChEBI" id="CHEBI:30616"/>
        <dbReference type="ChEBI" id="CHEBI:43474"/>
        <dbReference type="ChEBI" id="CHEBI:456216"/>
        <dbReference type="EC" id="3.6.4.13"/>
    </reaction>
</comment>
<comment type="subunit">
    <text evidence="1">Component of the RNA degradosome, which is a multiprotein complex involved in RNA processing and mRNA degradation.</text>
</comment>
<comment type="subcellular location">
    <subcellularLocation>
        <location evidence="1">Cytoplasm</location>
    </subcellularLocation>
</comment>
<comment type="similarity">
    <text evidence="1">Belongs to the DEAD box helicase family. RhlB subfamily.</text>
</comment>
<sequence>MSKTHLTEQKFSDFALHPKVVEALEKKGFHNCTPIQALALPLTLAGRDVAGQAQTGTGKTMAFLTSTFHYLLSHPAIADRKVNQPRALIMAPTRELAVQIHADAEPLAEATGLKLGLAYGGDGYDKQLKVLESGVDILIGTTGRLIDYAKQNHINLGAIQVVVLDEADRMYDLGFIKDIRWLFRRMPPANQRLNMLFSATLSYRVRELAFEQMNNAEYIEVEPEQKTGHRIKEELFYPSNEEKMRLLQTLIEEEWPDRAIIFANTKHRCEEIWGHLAADGHRVGLLTGDVAQKKRLRILDEFTRGDLDILVATDVAARGLHIPAVTHVFNYDLPDDCEDYVHRIGRTGRAGASGHSISLACEEYALNLPAIENYIGHSILVSKYNPDALMTDLPKPLRLTRARTGNGPRRTGAPRNRRRSG</sequence>
<evidence type="ECO:0000255" key="1">
    <source>
        <dbReference type="HAMAP-Rule" id="MF_00661"/>
    </source>
</evidence>
<evidence type="ECO:0000256" key="2">
    <source>
        <dbReference type="SAM" id="MobiDB-lite"/>
    </source>
</evidence>
<feature type="chain" id="PRO_1000082873" description="ATP-dependent RNA helicase RhlB">
    <location>
        <begin position="1"/>
        <end position="421"/>
    </location>
</feature>
<feature type="domain" description="Helicase ATP-binding" evidence="1">
    <location>
        <begin position="40"/>
        <end position="219"/>
    </location>
</feature>
<feature type="domain" description="Helicase C-terminal" evidence="1">
    <location>
        <begin position="245"/>
        <end position="390"/>
    </location>
</feature>
<feature type="region of interest" description="Disordered" evidence="2">
    <location>
        <begin position="395"/>
        <end position="421"/>
    </location>
</feature>
<feature type="short sequence motif" description="Q motif">
    <location>
        <begin position="9"/>
        <end position="37"/>
    </location>
</feature>
<feature type="short sequence motif" description="DEAD box">
    <location>
        <begin position="165"/>
        <end position="168"/>
    </location>
</feature>
<feature type="compositionally biased region" description="Low complexity" evidence="2">
    <location>
        <begin position="402"/>
        <end position="414"/>
    </location>
</feature>
<feature type="binding site" evidence="1">
    <location>
        <begin position="53"/>
        <end position="60"/>
    </location>
    <ligand>
        <name>ATP</name>
        <dbReference type="ChEBI" id="CHEBI:30616"/>
    </ligand>
</feature>
<accession>Q0SYX0</accession>
<proteinExistence type="inferred from homology"/>
<name>RHLB_SHIF8</name>
<gene>
    <name evidence="1" type="primary">rhlB</name>
    <name type="ordered locus">SFV_3724</name>
</gene>
<dbReference type="EC" id="3.6.4.13" evidence="1"/>
<dbReference type="EMBL" id="CP000266">
    <property type="protein sequence ID" value="ABF05745.1"/>
    <property type="molecule type" value="Genomic_DNA"/>
</dbReference>
<dbReference type="RefSeq" id="WP_000047497.1">
    <property type="nucleotide sequence ID" value="NC_008258.1"/>
</dbReference>
<dbReference type="SMR" id="Q0SYX0"/>
<dbReference type="KEGG" id="sfv:SFV_3724"/>
<dbReference type="HOGENOM" id="CLU_003041_1_3_6"/>
<dbReference type="Proteomes" id="UP000000659">
    <property type="component" value="Chromosome"/>
</dbReference>
<dbReference type="GO" id="GO:0005829">
    <property type="term" value="C:cytosol"/>
    <property type="evidence" value="ECO:0007669"/>
    <property type="project" value="TreeGrafter"/>
</dbReference>
<dbReference type="GO" id="GO:0005524">
    <property type="term" value="F:ATP binding"/>
    <property type="evidence" value="ECO:0007669"/>
    <property type="project" value="UniProtKB-UniRule"/>
</dbReference>
<dbReference type="GO" id="GO:0016887">
    <property type="term" value="F:ATP hydrolysis activity"/>
    <property type="evidence" value="ECO:0007669"/>
    <property type="project" value="RHEA"/>
</dbReference>
<dbReference type="GO" id="GO:0003723">
    <property type="term" value="F:RNA binding"/>
    <property type="evidence" value="ECO:0007669"/>
    <property type="project" value="UniProtKB-UniRule"/>
</dbReference>
<dbReference type="GO" id="GO:0003724">
    <property type="term" value="F:RNA helicase activity"/>
    <property type="evidence" value="ECO:0007669"/>
    <property type="project" value="UniProtKB-UniRule"/>
</dbReference>
<dbReference type="GO" id="GO:0006401">
    <property type="term" value="P:RNA catabolic process"/>
    <property type="evidence" value="ECO:0007669"/>
    <property type="project" value="UniProtKB-UniRule"/>
</dbReference>
<dbReference type="CDD" id="cd00268">
    <property type="entry name" value="DEADc"/>
    <property type="match status" value="1"/>
</dbReference>
<dbReference type="CDD" id="cd18787">
    <property type="entry name" value="SF2_C_DEAD"/>
    <property type="match status" value="1"/>
</dbReference>
<dbReference type="FunFam" id="3.40.50.300:FF:000312">
    <property type="entry name" value="ATP-dependent RNA helicase RhlB"/>
    <property type="match status" value="1"/>
</dbReference>
<dbReference type="Gene3D" id="3.40.50.300">
    <property type="entry name" value="P-loop containing nucleotide triphosphate hydrolases"/>
    <property type="match status" value="2"/>
</dbReference>
<dbReference type="HAMAP" id="MF_00661">
    <property type="entry name" value="DEAD_helicase_RhlB"/>
    <property type="match status" value="1"/>
</dbReference>
<dbReference type="InterPro" id="IPR011545">
    <property type="entry name" value="DEAD/DEAH_box_helicase_dom"/>
</dbReference>
<dbReference type="InterPro" id="IPR050079">
    <property type="entry name" value="DEAD_box_RNA_helicase"/>
</dbReference>
<dbReference type="InterPro" id="IPR014001">
    <property type="entry name" value="Helicase_ATP-bd"/>
</dbReference>
<dbReference type="InterPro" id="IPR001650">
    <property type="entry name" value="Helicase_C-like"/>
</dbReference>
<dbReference type="InterPro" id="IPR027417">
    <property type="entry name" value="P-loop_NTPase"/>
</dbReference>
<dbReference type="InterPro" id="IPR000629">
    <property type="entry name" value="RNA-helicase_DEAD-box_CS"/>
</dbReference>
<dbReference type="InterPro" id="IPR023554">
    <property type="entry name" value="RNA_helicase_ATP-dep_RhlB"/>
</dbReference>
<dbReference type="InterPro" id="IPR014014">
    <property type="entry name" value="RNA_helicase_DEAD_Q_motif"/>
</dbReference>
<dbReference type="NCBIfam" id="NF003419">
    <property type="entry name" value="PRK04837.1"/>
    <property type="match status" value="1"/>
</dbReference>
<dbReference type="PANTHER" id="PTHR47959:SF10">
    <property type="entry name" value="ATP-DEPENDENT RNA HELICASE RHLB"/>
    <property type="match status" value="1"/>
</dbReference>
<dbReference type="PANTHER" id="PTHR47959">
    <property type="entry name" value="ATP-DEPENDENT RNA HELICASE RHLE-RELATED"/>
    <property type="match status" value="1"/>
</dbReference>
<dbReference type="Pfam" id="PF00270">
    <property type="entry name" value="DEAD"/>
    <property type="match status" value="1"/>
</dbReference>
<dbReference type="Pfam" id="PF00271">
    <property type="entry name" value="Helicase_C"/>
    <property type="match status" value="1"/>
</dbReference>
<dbReference type="SMART" id="SM00487">
    <property type="entry name" value="DEXDc"/>
    <property type="match status" value="1"/>
</dbReference>
<dbReference type="SMART" id="SM00490">
    <property type="entry name" value="HELICc"/>
    <property type="match status" value="1"/>
</dbReference>
<dbReference type="SUPFAM" id="SSF52540">
    <property type="entry name" value="P-loop containing nucleoside triphosphate hydrolases"/>
    <property type="match status" value="1"/>
</dbReference>
<dbReference type="PROSITE" id="PS00039">
    <property type="entry name" value="DEAD_ATP_HELICASE"/>
    <property type="match status" value="1"/>
</dbReference>
<dbReference type="PROSITE" id="PS51192">
    <property type="entry name" value="HELICASE_ATP_BIND_1"/>
    <property type="match status" value="1"/>
</dbReference>
<dbReference type="PROSITE" id="PS51194">
    <property type="entry name" value="HELICASE_CTER"/>
    <property type="match status" value="1"/>
</dbReference>
<dbReference type="PROSITE" id="PS51195">
    <property type="entry name" value="Q_MOTIF"/>
    <property type="match status" value="1"/>
</dbReference>
<organism>
    <name type="scientific">Shigella flexneri serotype 5b (strain 8401)</name>
    <dbReference type="NCBI Taxonomy" id="373384"/>
    <lineage>
        <taxon>Bacteria</taxon>
        <taxon>Pseudomonadati</taxon>
        <taxon>Pseudomonadota</taxon>
        <taxon>Gammaproteobacteria</taxon>
        <taxon>Enterobacterales</taxon>
        <taxon>Enterobacteriaceae</taxon>
        <taxon>Shigella</taxon>
    </lineage>
</organism>
<protein>
    <recommendedName>
        <fullName evidence="1">ATP-dependent RNA helicase RhlB</fullName>
        <ecNumber evidence="1">3.6.4.13</ecNumber>
    </recommendedName>
</protein>